<proteinExistence type="inferred from homology"/>
<keyword id="KW-0028">Amino-acid biosynthesis</keyword>
<keyword id="KW-0963">Cytoplasm</keyword>
<keyword id="KW-0368">Histidine biosynthesis</keyword>
<keyword id="KW-0456">Lyase</keyword>
<name>HIS6_AZOBR</name>
<comment type="function">
    <text evidence="1">IGPS catalyzes the conversion of PRFAR and glutamine to IGP, AICAR and glutamate. The HisF subunit catalyzes the cyclization activity that produces IGP and AICAR from PRFAR using the ammonia provided by the HisH subunit (By similarity).</text>
</comment>
<comment type="catalytic activity">
    <reaction>
        <text>5-[(5-phospho-1-deoxy-D-ribulos-1-ylimino)methylamino]-1-(5-phospho-beta-D-ribosyl)imidazole-4-carboxamide + L-glutamine = D-erythro-1-(imidazol-4-yl)glycerol 3-phosphate + 5-amino-1-(5-phospho-beta-D-ribosyl)imidazole-4-carboxamide + L-glutamate + H(+)</text>
        <dbReference type="Rhea" id="RHEA:24793"/>
        <dbReference type="ChEBI" id="CHEBI:15378"/>
        <dbReference type="ChEBI" id="CHEBI:29985"/>
        <dbReference type="ChEBI" id="CHEBI:58278"/>
        <dbReference type="ChEBI" id="CHEBI:58359"/>
        <dbReference type="ChEBI" id="CHEBI:58475"/>
        <dbReference type="ChEBI" id="CHEBI:58525"/>
        <dbReference type="EC" id="4.3.2.10"/>
    </reaction>
</comment>
<comment type="pathway">
    <text>Amino-acid biosynthesis; L-histidine biosynthesis; L-histidine from 5-phospho-alpha-D-ribose 1-diphosphate: step 5/9.</text>
</comment>
<comment type="subunit">
    <text evidence="1">Heterodimer of HisH and HisF.</text>
</comment>
<comment type="subcellular location">
    <subcellularLocation>
        <location evidence="1">Cytoplasm</location>
    </subcellularLocation>
</comment>
<comment type="similarity">
    <text evidence="3">Belongs to the HisA/HisF family.</text>
</comment>
<organism>
    <name type="scientific">Azospirillum brasilense</name>
    <dbReference type="NCBI Taxonomy" id="192"/>
    <lineage>
        <taxon>Bacteria</taxon>
        <taxon>Pseudomonadati</taxon>
        <taxon>Pseudomonadota</taxon>
        <taxon>Alphaproteobacteria</taxon>
        <taxon>Rhodospirillales</taxon>
        <taxon>Azospirillaceae</taxon>
        <taxon>Azospirillum</taxon>
    </lineage>
</organism>
<evidence type="ECO:0000250" key="1"/>
<evidence type="ECO:0000255" key="2"/>
<evidence type="ECO:0000305" key="3"/>
<sequence length="261" mass="28061">MLKMRVIPCLDVKDGRVVKGVNFVDLIDAGDPVEQARVYDREGADELTFLDITASHENRDTIYDVVRRTAEQVFMPLTVGGGVRTVDDIRKLLLAGADKVSINTAAIHRPEFVQEAAEKFGAQCIVVAIDAKQVEPGRWEIFTHGGRKATGIDAIEWAKRMESYGAGEILLTSMDRDGTKSGFDLALTRKVADGLRIPVIASGGVGTLDHLVEGIREGHATAVLAASIFHFGTYTIGQAKAALAEAGIPVRPARMAEAAHG</sequence>
<feature type="chain" id="PRO_0000142110" description="Imidazole glycerol phosphate synthase subunit HisF">
    <location>
        <begin position="1"/>
        <end position="261"/>
    </location>
</feature>
<feature type="active site" evidence="2">
    <location>
        <position position="11"/>
    </location>
</feature>
<feature type="active site" evidence="2">
    <location>
        <position position="130"/>
    </location>
</feature>
<accession>P26721</accession>
<dbReference type="EC" id="4.3.2.10"/>
<dbReference type="EMBL" id="X61207">
    <property type="protein sequence ID" value="CAA43519.1"/>
    <property type="molecule type" value="Genomic_DNA"/>
</dbReference>
<dbReference type="PIR" id="S16802">
    <property type="entry name" value="S16802"/>
</dbReference>
<dbReference type="RefSeq" id="WP_035670296.1">
    <property type="nucleotide sequence ID" value="NZ_CP012914.1"/>
</dbReference>
<dbReference type="SMR" id="P26721"/>
<dbReference type="GeneID" id="56449788"/>
<dbReference type="UniPathway" id="UPA00031">
    <property type="reaction ID" value="UER00010"/>
</dbReference>
<dbReference type="GO" id="GO:0005737">
    <property type="term" value="C:cytoplasm"/>
    <property type="evidence" value="ECO:0007669"/>
    <property type="project" value="UniProtKB-SubCell"/>
</dbReference>
<dbReference type="GO" id="GO:0000107">
    <property type="term" value="F:imidazoleglycerol-phosphate synthase activity"/>
    <property type="evidence" value="ECO:0007669"/>
    <property type="project" value="UniProtKB-UniRule"/>
</dbReference>
<dbReference type="GO" id="GO:0016829">
    <property type="term" value="F:lyase activity"/>
    <property type="evidence" value="ECO:0007669"/>
    <property type="project" value="UniProtKB-KW"/>
</dbReference>
<dbReference type="GO" id="GO:0000105">
    <property type="term" value="P:L-histidine biosynthetic process"/>
    <property type="evidence" value="ECO:0007669"/>
    <property type="project" value="UniProtKB-UniRule"/>
</dbReference>
<dbReference type="CDD" id="cd04731">
    <property type="entry name" value="HisF"/>
    <property type="match status" value="1"/>
</dbReference>
<dbReference type="FunFam" id="3.20.20.70:FF:000006">
    <property type="entry name" value="Imidazole glycerol phosphate synthase subunit HisF"/>
    <property type="match status" value="1"/>
</dbReference>
<dbReference type="Gene3D" id="3.20.20.70">
    <property type="entry name" value="Aldolase class I"/>
    <property type="match status" value="1"/>
</dbReference>
<dbReference type="HAMAP" id="MF_01013">
    <property type="entry name" value="HisF"/>
    <property type="match status" value="1"/>
</dbReference>
<dbReference type="InterPro" id="IPR013785">
    <property type="entry name" value="Aldolase_TIM"/>
</dbReference>
<dbReference type="InterPro" id="IPR006062">
    <property type="entry name" value="His_biosynth"/>
</dbReference>
<dbReference type="InterPro" id="IPR004651">
    <property type="entry name" value="HisF"/>
</dbReference>
<dbReference type="InterPro" id="IPR050064">
    <property type="entry name" value="IGPS_HisA/HisF"/>
</dbReference>
<dbReference type="InterPro" id="IPR011060">
    <property type="entry name" value="RibuloseP-bd_barrel"/>
</dbReference>
<dbReference type="NCBIfam" id="TIGR00735">
    <property type="entry name" value="hisF"/>
    <property type="match status" value="1"/>
</dbReference>
<dbReference type="PANTHER" id="PTHR21235:SF2">
    <property type="entry name" value="IMIDAZOLE GLYCEROL PHOSPHATE SYNTHASE HISHF"/>
    <property type="match status" value="1"/>
</dbReference>
<dbReference type="PANTHER" id="PTHR21235">
    <property type="entry name" value="IMIDAZOLE GLYCEROL PHOSPHATE SYNTHASE SUBUNIT HISF/H IGP SYNTHASE SUBUNIT HISF/H"/>
    <property type="match status" value="1"/>
</dbReference>
<dbReference type="Pfam" id="PF00977">
    <property type="entry name" value="His_biosynth"/>
    <property type="match status" value="1"/>
</dbReference>
<dbReference type="SUPFAM" id="SSF51366">
    <property type="entry name" value="Ribulose-phoshate binding barrel"/>
    <property type="match status" value="1"/>
</dbReference>
<reference key="1">
    <citation type="journal article" date="1989" name="Mol. Gen. Genet.">
        <title>Cloning of histidine genes of Azospirillum brasilense: organization of the ABFH gene cluster and nucleotide sequence of the hisB gene.</title>
        <authorList>
            <person name="Fani R."/>
            <person name="Bazzicalupo M."/>
            <person name="Damiani G."/>
            <person name="Bianchi A."/>
            <person name="Schipani C."/>
            <person name="Sgaramella V."/>
            <person name="Polsinelli M."/>
        </authorList>
    </citation>
    <scope>NUCLEOTIDE SEQUENCE [GENOMIC DNA]</scope>
    <source>
        <strain>Sp6</strain>
    </source>
</reference>
<gene>
    <name type="primary">hisF</name>
</gene>
<protein>
    <recommendedName>
        <fullName>Imidazole glycerol phosphate synthase subunit HisF</fullName>
        <ecNumber>4.3.2.10</ecNumber>
    </recommendedName>
    <alternativeName>
        <fullName>IGP synthase cyclase subunit</fullName>
    </alternativeName>
    <alternativeName>
        <fullName>IGP synthase subunit HisF</fullName>
    </alternativeName>
    <alternativeName>
        <fullName>ImGP synthase subunit HisF</fullName>
        <shortName>IGPS subunit HisF</shortName>
    </alternativeName>
</protein>